<proteinExistence type="evidence at transcript level"/>
<name>C19L1_DROME</name>
<organism>
    <name type="scientific">Drosophila melanogaster</name>
    <name type="common">Fruit fly</name>
    <dbReference type="NCBI Taxonomy" id="7227"/>
    <lineage>
        <taxon>Eukaryota</taxon>
        <taxon>Metazoa</taxon>
        <taxon>Ecdysozoa</taxon>
        <taxon>Arthropoda</taxon>
        <taxon>Hexapoda</taxon>
        <taxon>Insecta</taxon>
        <taxon>Pterygota</taxon>
        <taxon>Neoptera</taxon>
        <taxon>Endopterygota</taxon>
        <taxon>Diptera</taxon>
        <taxon>Brachycera</taxon>
        <taxon>Muscomorpha</taxon>
        <taxon>Ephydroidea</taxon>
        <taxon>Drosophilidae</taxon>
        <taxon>Drosophila</taxon>
        <taxon>Sophophora</taxon>
    </lineage>
</organism>
<comment type="similarity">
    <text evidence="2">Belongs to the CWF19 family.</text>
</comment>
<comment type="sequence caution" evidence="2">
    <conflict type="frameshift">
        <sequence resource="EMBL-CDS" id="AAO45198"/>
    </conflict>
</comment>
<gene>
    <name type="ORF">CG7741</name>
</gene>
<protein>
    <recommendedName>
        <fullName>CWF19-like protein 1 homolog</fullName>
    </recommendedName>
</protein>
<reference key="1">
    <citation type="journal article" date="2000" name="Science">
        <title>The genome sequence of Drosophila melanogaster.</title>
        <authorList>
            <person name="Adams M.D."/>
            <person name="Celniker S.E."/>
            <person name="Holt R.A."/>
            <person name="Evans C.A."/>
            <person name="Gocayne J.D."/>
            <person name="Amanatides P.G."/>
            <person name="Scherer S.E."/>
            <person name="Li P.W."/>
            <person name="Hoskins R.A."/>
            <person name="Galle R.F."/>
            <person name="George R.A."/>
            <person name="Lewis S.E."/>
            <person name="Richards S."/>
            <person name="Ashburner M."/>
            <person name="Henderson S.N."/>
            <person name="Sutton G.G."/>
            <person name="Wortman J.R."/>
            <person name="Yandell M.D."/>
            <person name="Zhang Q."/>
            <person name="Chen L.X."/>
            <person name="Brandon R.C."/>
            <person name="Rogers Y.-H.C."/>
            <person name="Blazej R.G."/>
            <person name="Champe M."/>
            <person name="Pfeiffer B.D."/>
            <person name="Wan K.H."/>
            <person name="Doyle C."/>
            <person name="Baxter E.G."/>
            <person name="Helt G."/>
            <person name="Nelson C.R."/>
            <person name="Miklos G.L.G."/>
            <person name="Abril J.F."/>
            <person name="Agbayani A."/>
            <person name="An H.-J."/>
            <person name="Andrews-Pfannkoch C."/>
            <person name="Baldwin D."/>
            <person name="Ballew R.M."/>
            <person name="Basu A."/>
            <person name="Baxendale J."/>
            <person name="Bayraktaroglu L."/>
            <person name="Beasley E.M."/>
            <person name="Beeson K.Y."/>
            <person name="Benos P.V."/>
            <person name="Berman B.P."/>
            <person name="Bhandari D."/>
            <person name="Bolshakov S."/>
            <person name="Borkova D."/>
            <person name="Botchan M.R."/>
            <person name="Bouck J."/>
            <person name="Brokstein P."/>
            <person name="Brottier P."/>
            <person name="Burtis K.C."/>
            <person name="Busam D.A."/>
            <person name="Butler H."/>
            <person name="Cadieu E."/>
            <person name="Center A."/>
            <person name="Chandra I."/>
            <person name="Cherry J.M."/>
            <person name="Cawley S."/>
            <person name="Dahlke C."/>
            <person name="Davenport L.B."/>
            <person name="Davies P."/>
            <person name="de Pablos B."/>
            <person name="Delcher A."/>
            <person name="Deng Z."/>
            <person name="Mays A.D."/>
            <person name="Dew I."/>
            <person name="Dietz S.M."/>
            <person name="Dodson K."/>
            <person name="Doup L.E."/>
            <person name="Downes M."/>
            <person name="Dugan-Rocha S."/>
            <person name="Dunkov B.C."/>
            <person name="Dunn P."/>
            <person name="Durbin K.J."/>
            <person name="Evangelista C.C."/>
            <person name="Ferraz C."/>
            <person name="Ferriera S."/>
            <person name="Fleischmann W."/>
            <person name="Fosler C."/>
            <person name="Gabrielian A.E."/>
            <person name="Garg N.S."/>
            <person name="Gelbart W.M."/>
            <person name="Glasser K."/>
            <person name="Glodek A."/>
            <person name="Gong F."/>
            <person name="Gorrell J.H."/>
            <person name="Gu Z."/>
            <person name="Guan P."/>
            <person name="Harris M."/>
            <person name="Harris N.L."/>
            <person name="Harvey D.A."/>
            <person name="Heiman T.J."/>
            <person name="Hernandez J.R."/>
            <person name="Houck J."/>
            <person name="Hostin D."/>
            <person name="Houston K.A."/>
            <person name="Howland T.J."/>
            <person name="Wei M.-H."/>
            <person name="Ibegwam C."/>
            <person name="Jalali M."/>
            <person name="Kalush F."/>
            <person name="Karpen G.H."/>
            <person name="Ke Z."/>
            <person name="Kennison J.A."/>
            <person name="Ketchum K.A."/>
            <person name="Kimmel B.E."/>
            <person name="Kodira C.D."/>
            <person name="Kraft C.L."/>
            <person name="Kravitz S."/>
            <person name="Kulp D."/>
            <person name="Lai Z."/>
            <person name="Lasko P."/>
            <person name="Lei Y."/>
            <person name="Levitsky A.A."/>
            <person name="Li J.H."/>
            <person name="Li Z."/>
            <person name="Liang Y."/>
            <person name="Lin X."/>
            <person name="Liu X."/>
            <person name="Mattei B."/>
            <person name="McIntosh T.C."/>
            <person name="McLeod M.P."/>
            <person name="McPherson D."/>
            <person name="Merkulov G."/>
            <person name="Milshina N.V."/>
            <person name="Mobarry C."/>
            <person name="Morris J."/>
            <person name="Moshrefi A."/>
            <person name="Mount S.M."/>
            <person name="Moy M."/>
            <person name="Murphy B."/>
            <person name="Murphy L."/>
            <person name="Muzny D.M."/>
            <person name="Nelson D.L."/>
            <person name="Nelson D.R."/>
            <person name="Nelson K.A."/>
            <person name="Nixon K."/>
            <person name="Nusskern D.R."/>
            <person name="Pacleb J.M."/>
            <person name="Palazzolo M."/>
            <person name="Pittman G.S."/>
            <person name="Pan S."/>
            <person name="Pollard J."/>
            <person name="Puri V."/>
            <person name="Reese M.G."/>
            <person name="Reinert K."/>
            <person name="Remington K."/>
            <person name="Saunders R.D.C."/>
            <person name="Scheeler F."/>
            <person name="Shen H."/>
            <person name="Shue B.C."/>
            <person name="Siden-Kiamos I."/>
            <person name="Simpson M."/>
            <person name="Skupski M.P."/>
            <person name="Smith T.J."/>
            <person name="Spier E."/>
            <person name="Spradling A.C."/>
            <person name="Stapleton M."/>
            <person name="Strong R."/>
            <person name="Sun E."/>
            <person name="Svirskas R."/>
            <person name="Tector C."/>
            <person name="Turner R."/>
            <person name="Venter E."/>
            <person name="Wang A.H."/>
            <person name="Wang X."/>
            <person name="Wang Z.-Y."/>
            <person name="Wassarman D.A."/>
            <person name="Weinstock G.M."/>
            <person name="Weissenbach J."/>
            <person name="Williams S.M."/>
            <person name="Woodage T."/>
            <person name="Worley K.C."/>
            <person name="Wu D."/>
            <person name="Yang S."/>
            <person name="Yao Q.A."/>
            <person name="Ye J."/>
            <person name="Yeh R.-F."/>
            <person name="Zaveri J.S."/>
            <person name="Zhan M."/>
            <person name="Zhang G."/>
            <person name="Zhao Q."/>
            <person name="Zheng L."/>
            <person name="Zheng X.H."/>
            <person name="Zhong F.N."/>
            <person name="Zhong W."/>
            <person name="Zhou X."/>
            <person name="Zhu S.C."/>
            <person name="Zhu X."/>
            <person name="Smith H.O."/>
            <person name="Gibbs R.A."/>
            <person name="Myers E.W."/>
            <person name="Rubin G.M."/>
            <person name="Venter J.C."/>
        </authorList>
    </citation>
    <scope>NUCLEOTIDE SEQUENCE [LARGE SCALE GENOMIC DNA]</scope>
    <source>
        <strain>Berkeley</strain>
    </source>
</reference>
<reference key="2">
    <citation type="journal article" date="2002" name="Genome Biol.">
        <title>Annotation of the Drosophila melanogaster euchromatic genome: a systematic review.</title>
        <authorList>
            <person name="Misra S."/>
            <person name="Crosby M.A."/>
            <person name="Mungall C.J."/>
            <person name="Matthews B.B."/>
            <person name="Campbell K.S."/>
            <person name="Hradecky P."/>
            <person name="Huang Y."/>
            <person name="Kaminker J.S."/>
            <person name="Millburn G.H."/>
            <person name="Prochnik S.E."/>
            <person name="Smith C.D."/>
            <person name="Tupy J.L."/>
            <person name="Whitfield E.J."/>
            <person name="Bayraktaroglu L."/>
            <person name="Berman B.P."/>
            <person name="Bettencourt B.R."/>
            <person name="Celniker S.E."/>
            <person name="de Grey A.D.N.J."/>
            <person name="Drysdale R.A."/>
            <person name="Harris N.L."/>
            <person name="Richter J."/>
            <person name="Russo S."/>
            <person name="Schroeder A.J."/>
            <person name="Shu S.Q."/>
            <person name="Stapleton M."/>
            <person name="Yamada C."/>
            <person name="Ashburner M."/>
            <person name="Gelbart W.M."/>
            <person name="Rubin G.M."/>
            <person name="Lewis S.E."/>
        </authorList>
    </citation>
    <scope>GENOME REANNOTATION</scope>
    <source>
        <strain>Berkeley</strain>
    </source>
</reference>
<reference key="3">
    <citation type="submission" date="2008-11" db="EMBL/GenBank/DDBJ databases">
        <authorList>
            <person name="Stapleton M."/>
            <person name="Brokstein P."/>
            <person name="Hong L."/>
            <person name="Agbayani A."/>
            <person name="Carlson J.W."/>
            <person name="Booth B."/>
            <person name="Champe M."/>
            <person name="Chavez C."/>
            <person name="Dorsett V."/>
            <person name="Dresnek D."/>
            <person name="Farfan D."/>
            <person name="Frise E."/>
            <person name="George R.A."/>
            <person name="Gonzalez M."/>
            <person name="Guarin H."/>
            <person name="Kronmiller B."/>
            <person name="Li P.W."/>
            <person name="Liao G."/>
            <person name="Miranda A."/>
            <person name="Mungall C.J."/>
            <person name="Nunoo J."/>
            <person name="Pacleb J.M."/>
            <person name="Paragas V."/>
            <person name="Park S."/>
            <person name="Patel S."/>
            <person name="Phouanenavong S."/>
            <person name="Wan K.H."/>
            <person name="Yu C."/>
            <person name="Lewis S.E."/>
            <person name="Rubin G.M."/>
            <person name="Celniker S.E."/>
        </authorList>
    </citation>
    <scope>NUCLEOTIDE SEQUENCE [LARGE SCALE MRNA]</scope>
    <source>
        <strain>Berkeley</strain>
        <tissue>Embryo</tissue>
    </source>
</reference>
<keyword id="KW-1185">Reference proteome</keyword>
<dbReference type="EMBL" id="AE013599">
    <property type="protein sequence ID" value="AAF58671.2"/>
    <property type="molecule type" value="Genomic_DNA"/>
</dbReference>
<dbReference type="EMBL" id="BT004842">
    <property type="protein sequence ID" value="AAO45198.1"/>
    <property type="status" value="ALT_FRAME"/>
    <property type="molecule type" value="mRNA"/>
</dbReference>
<dbReference type="EMBL" id="BT050433">
    <property type="protein sequence ID" value="ACJ13140.1"/>
    <property type="molecule type" value="mRNA"/>
</dbReference>
<dbReference type="RefSeq" id="NP_610670.2">
    <property type="nucleotide sequence ID" value="NM_136826.3"/>
</dbReference>
<dbReference type="SMR" id="A1Z8J0"/>
<dbReference type="FunCoup" id="A1Z8J0">
    <property type="interactions" value="2062"/>
</dbReference>
<dbReference type="IntAct" id="A1Z8J0">
    <property type="interactions" value="4"/>
</dbReference>
<dbReference type="STRING" id="7227.FBpp0087219"/>
<dbReference type="PaxDb" id="7227-FBpp0087219"/>
<dbReference type="DNASU" id="36208"/>
<dbReference type="EnsemblMetazoa" id="FBtr0088118">
    <property type="protein sequence ID" value="FBpp0087219"/>
    <property type="gene ID" value="FBgn0033615"/>
</dbReference>
<dbReference type="GeneID" id="36208"/>
<dbReference type="KEGG" id="dme:Dmel_CG7741"/>
<dbReference type="UCSC" id="CG7741-RA">
    <property type="organism name" value="d. melanogaster"/>
</dbReference>
<dbReference type="AGR" id="FB:FBgn0033615"/>
<dbReference type="FlyBase" id="FBgn0033615">
    <property type="gene designation" value="CG7741"/>
</dbReference>
<dbReference type="VEuPathDB" id="VectorBase:FBgn0033615"/>
<dbReference type="eggNOG" id="KOG2476">
    <property type="taxonomic scope" value="Eukaryota"/>
</dbReference>
<dbReference type="GeneTree" id="ENSGT00940000156000"/>
<dbReference type="InParanoid" id="A1Z8J0"/>
<dbReference type="OMA" id="IVPITHY"/>
<dbReference type="OrthoDB" id="444325at2759"/>
<dbReference type="PhylomeDB" id="A1Z8J0"/>
<dbReference type="BioGRID-ORCS" id="36208">
    <property type="hits" value="0 hits in 1 CRISPR screen"/>
</dbReference>
<dbReference type="GenomeRNAi" id="36208"/>
<dbReference type="PRO" id="PR:A1Z8J0"/>
<dbReference type="Proteomes" id="UP000000803">
    <property type="component" value="Chromosome 2R"/>
</dbReference>
<dbReference type="Bgee" id="FBgn0033615">
    <property type="expression patterns" value="Expressed in adult Malpighian tubule principal cell of lower segment in Malpighian tubule and 56 other cell types or tissues"/>
</dbReference>
<dbReference type="ExpressionAtlas" id="A1Z8J0">
    <property type="expression patterns" value="baseline and differential"/>
</dbReference>
<dbReference type="GO" id="GO:0071014">
    <property type="term" value="C:post-mRNA release spliceosomal complex"/>
    <property type="evidence" value="ECO:0000318"/>
    <property type="project" value="GO_Central"/>
</dbReference>
<dbReference type="GO" id="GO:0061632">
    <property type="term" value="F:RNA lariat debranching enzyme activator activity"/>
    <property type="evidence" value="ECO:0000318"/>
    <property type="project" value="GO_Central"/>
</dbReference>
<dbReference type="GO" id="GO:0000398">
    <property type="term" value="P:mRNA splicing, via spliceosome"/>
    <property type="evidence" value="ECO:0000318"/>
    <property type="project" value="GO_Central"/>
</dbReference>
<dbReference type="CDD" id="cd07380">
    <property type="entry name" value="MPP_CWF19_N"/>
    <property type="match status" value="1"/>
</dbReference>
<dbReference type="FunFam" id="3.30.428.10:FF:000018">
    <property type="entry name" value="Zinc finger CCCH domain-containing protein 59"/>
    <property type="match status" value="1"/>
</dbReference>
<dbReference type="Gene3D" id="3.30.428.10">
    <property type="entry name" value="HIT-like"/>
    <property type="match status" value="1"/>
</dbReference>
<dbReference type="InterPro" id="IPR040194">
    <property type="entry name" value="Cwf19-like"/>
</dbReference>
<dbReference type="InterPro" id="IPR006768">
    <property type="entry name" value="Cwf19-like_C_dom-1"/>
</dbReference>
<dbReference type="InterPro" id="IPR006767">
    <property type="entry name" value="Cwf19-like_C_dom-2"/>
</dbReference>
<dbReference type="InterPro" id="IPR036265">
    <property type="entry name" value="HIT-like_sf"/>
</dbReference>
<dbReference type="PANTHER" id="PTHR12072">
    <property type="entry name" value="CWF19, CELL CYCLE CONTROL PROTEIN"/>
    <property type="match status" value="1"/>
</dbReference>
<dbReference type="PANTHER" id="PTHR12072:SF4">
    <property type="entry name" value="CWF19-LIKE PROTEIN 1"/>
    <property type="match status" value="1"/>
</dbReference>
<dbReference type="Pfam" id="PF04677">
    <property type="entry name" value="CwfJ_C_1"/>
    <property type="match status" value="1"/>
</dbReference>
<dbReference type="Pfam" id="PF04676">
    <property type="entry name" value="CwfJ_C_2"/>
    <property type="match status" value="1"/>
</dbReference>
<dbReference type="SUPFAM" id="SSF54197">
    <property type="entry name" value="HIT-like"/>
    <property type="match status" value="1"/>
</dbReference>
<sequence length="545" mass="62154">MHQVGSTNMMKIQSIAQLSITMDAGTKILVVGDVRGRFKQLFQRVEQVNKKAGPFEILCCVGDFFGEDKQNEELIAYKNGFKHITVPTYILGPNQREHEKYFENLTDGEICTNLTYLGRRGVYTLSSGVKIAYLSGLEAQGTADSAGSEHEFTKADVIAVRNSCLVSKNCSTEYRGVDVLLTSQWPFGMQEKENATASKLVSFLCREIKPRYHFCAINGTHYESAPFRMPKDETTQFELCTRFISLAEVGNAEKAKYIYALSLKPVDKSRLLDLAQKTTNEIPCPFIGLDLGGAIGKNDSSENRQYFYDMDGGRRKRQGGDNNKRDKRPRIPQIEQDKCWFCLSSPDVEKHLIITVGEHFYLALAKGPINKHHVMILSTKHVPCAAQLSPDDWKELNKFKAALRKFFKTLGQVVCFTERHYKSVHLQINALAFEEGYAWKIKHSFEDKAEEFNLEFETLPALDSEKMLPEMGPYFLAELPDDSTLITRQMKHFPIHFARDVFCSENLLNCDEKVNWKDCLLDKDEEVAYVEDFRKAFAPFDFTDD</sequence>
<feature type="chain" id="PRO_0000315647" description="CWF19-like protein 1 homolog">
    <location>
        <begin position="1"/>
        <end position="545"/>
    </location>
</feature>
<feature type="region of interest" description="Disordered" evidence="1">
    <location>
        <begin position="306"/>
        <end position="329"/>
    </location>
</feature>
<evidence type="ECO:0000256" key="1">
    <source>
        <dbReference type="SAM" id="MobiDB-lite"/>
    </source>
</evidence>
<evidence type="ECO:0000305" key="2"/>
<accession>A1Z8J0</accession>
<accession>B6IDJ3</accession>
<accession>Q86NM0</accession>